<reference key="1">
    <citation type="submission" date="2003-06" db="EMBL/GenBank/DDBJ databases">
        <title>The complete genome sequence of Haemophilus ducreyi.</title>
        <authorList>
            <person name="Munson R.S. Jr."/>
            <person name="Ray W.C."/>
            <person name="Mahairas G."/>
            <person name="Sabo P."/>
            <person name="Mungur R."/>
            <person name="Johnson L."/>
            <person name="Nguyen D."/>
            <person name="Wang J."/>
            <person name="Forst C."/>
            <person name="Hood L."/>
        </authorList>
    </citation>
    <scope>NUCLEOTIDE SEQUENCE [LARGE SCALE GENOMIC DNA]</scope>
    <source>
        <strain>35000HP / ATCC 700724</strain>
    </source>
</reference>
<accession>Q7VLQ4</accession>
<feature type="chain" id="PRO_0000135480" description="Queuine tRNA-ribosyltransferase">
    <location>
        <begin position="1"/>
        <end position="382"/>
    </location>
</feature>
<feature type="region of interest" description="RNA binding" evidence="1">
    <location>
        <begin position="250"/>
        <end position="256"/>
    </location>
</feature>
<feature type="region of interest" description="RNA binding; important for wobble base 34 recognition" evidence="1">
    <location>
        <begin position="274"/>
        <end position="278"/>
    </location>
</feature>
<feature type="active site" description="Proton acceptor" evidence="1">
    <location>
        <position position="94"/>
    </location>
</feature>
<feature type="active site" description="Nucleophile" evidence="1">
    <location>
        <position position="269"/>
    </location>
</feature>
<feature type="binding site" evidence="1">
    <location>
        <begin position="94"/>
        <end position="98"/>
    </location>
    <ligand>
        <name>substrate</name>
    </ligand>
</feature>
<feature type="binding site" evidence="1">
    <location>
        <position position="148"/>
    </location>
    <ligand>
        <name>substrate</name>
    </ligand>
</feature>
<feature type="binding site" evidence="1">
    <location>
        <position position="192"/>
    </location>
    <ligand>
        <name>substrate</name>
    </ligand>
</feature>
<feature type="binding site" evidence="1">
    <location>
        <position position="219"/>
    </location>
    <ligand>
        <name>substrate</name>
    </ligand>
</feature>
<feature type="binding site" evidence="1">
    <location>
        <position position="307"/>
    </location>
    <ligand>
        <name>Zn(2+)</name>
        <dbReference type="ChEBI" id="CHEBI:29105"/>
    </ligand>
</feature>
<feature type="binding site" evidence="1">
    <location>
        <position position="309"/>
    </location>
    <ligand>
        <name>Zn(2+)</name>
        <dbReference type="ChEBI" id="CHEBI:29105"/>
    </ligand>
</feature>
<feature type="binding site" evidence="1">
    <location>
        <position position="312"/>
    </location>
    <ligand>
        <name>Zn(2+)</name>
        <dbReference type="ChEBI" id="CHEBI:29105"/>
    </ligand>
</feature>
<feature type="binding site" evidence="1">
    <location>
        <position position="338"/>
    </location>
    <ligand>
        <name>Zn(2+)</name>
        <dbReference type="ChEBI" id="CHEBI:29105"/>
    </ligand>
</feature>
<gene>
    <name evidence="1" type="primary">tgt</name>
    <name type="ordered locus">HD_1368</name>
</gene>
<keyword id="KW-0328">Glycosyltransferase</keyword>
<keyword id="KW-0479">Metal-binding</keyword>
<keyword id="KW-0671">Queuosine biosynthesis</keyword>
<keyword id="KW-1185">Reference proteome</keyword>
<keyword id="KW-0808">Transferase</keyword>
<keyword id="KW-0819">tRNA processing</keyword>
<keyword id="KW-0862">Zinc</keyword>
<evidence type="ECO:0000255" key="1">
    <source>
        <dbReference type="HAMAP-Rule" id="MF_00168"/>
    </source>
</evidence>
<proteinExistence type="inferred from homology"/>
<protein>
    <recommendedName>
        <fullName evidence="1">Queuine tRNA-ribosyltransferase</fullName>
        <ecNumber evidence="1">2.4.2.29</ecNumber>
    </recommendedName>
    <alternativeName>
        <fullName evidence="1">Guanine insertion enzyme</fullName>
    </alternativeName>
    <alternativeName>
        <fullName evidence="1">tRNA-guanine transglycosylase</fullName>
    </alternativeName>
</protein>
<name>TGT_HAEDU</name>
<dbReference type="EC" id="2.4.2.29" evidence="1"/>
<dbReference type="EMBL" id="AE017143">
    <property type="protein sequence ID" value="AAP96181.1"/>
    <property type="molecule type" value="Genomic_DNA"/>
</dbReference>
<dbReference type="SMR" id="Q7VLQ4"/>
<dbReference type="STRING" id="233412.HD_1368"/>
<dbReference type="KEGG" id="hdu:HD_1368"/>
<dbReference type="eggNOG" id="COG0343">
    <property type="taxonomic scope" value="Bacteria"/>
</dbReference>
<dbReference type="HOGENOM" id="CLU_022060_0_1_6"/>
<dbReference type="UniPathway" id="UPA00392"/>
<dbReference type="Proteomes" id="UP000001022">
    <property type="component" value="Chromosome"/>
</dbReference>
<dbReference type="GO" id="GO:0005829">
    <property type="term" value="C:cytosol"/>
    <property type="evidence" value="ECO:0007669"/>
    <property type="project" value="TreeGrafter"/>
</dbReference>
<dbReference type="GO" id="GO:0046872">
    <property type="term" value="F:metal ion binding"/>
    <property type="evidence" value="ECO:0007669"/>
    <property type="project" value="UniProtKB-KW"/>
</dbReference>
<dbReference type="GO" id="GO:0008479">
    <property type="term" value="F:tRNA-guanosine(34) queuine transglycosylase activity"/>
    <property type="evidence" value="ECO:0007669"/>
    <property type="project" value="UniProtKB-UniRule"/>
</dbReference>
<dbReference type="GO" id="GO:0008616">
    <property type="term" value="P:queuosine biosynthetic process"/>
    <property type="evidence" value="ECO:0007669"/>
    <property type="project" value="UniProtKB-UniRule"/>
</dbReference>
<dbReference type="GO" id="GO:0002099">
    <property type="term" value="P:tRNA wobble guanine modification"/>
    <property type="evidence" value="ECO:0007669"/>
    <property type="project" value="TreeGrafter"/>
</dbReference>
<dbReference type="GO" id="GO:0101030">
    <property type="term" value="P:tRNA-guanine transglycosylation"/>
    <property type="evidence" value="ECO:0007669"/>
    <property type="project" value="InterPro"/>
</dbReference>
<dbReference type="FunFam" id="3.20.20.105:FF:000001">
    <property type="entry name" value="Queuine tRNA-ribosyltransferase"/>
    <property type="match status" value="1"/>
</dbReference>
<dbReference type="Gene3D" id="3.20.20.105">
    <property type="entry name" value="Queuine tRNA-ribosyltransferase-like"/>
    <property type="match status" value="1"/>
</dbReference>
<dbReference type="HAMAP" id="MF_00168">
    <property type="entry name" value="Q_tRNA_Tgt"/>
    <property type="match status" value="1"/>
</dbReference>
<dbReference type="InterPro" id="IPR050076">
    <property type="entry name" value="ArchSynthase1/Queuine_TRR"/>
</dbReference>
<dbReference type="InterPro" id="IPR004803">
    <property type="entry name" value="TGT"/>
</dbReference>
<dbReference type="InterPro" id="IPR036511">
    <property type="entry name" value="TGT-like_sf"/>
</dbReference>
<dbReference type="InterPro" id="IPR002616">
    <property type="entry name" value="tRNA_ribo_trans-like"/>
</dbReference>
<dbReference type="NCBIfam" id="TIGR00430">
    <property type="entry name" value="Q_tRNA_tgt"/>
    <property type="match status" value="1"/>
</dbReference>
<dbReference type="NCBIfam" id="TIGR00449">
    <property type="entry name" value="tgt_general"/>
    <property type="match status" value="1"/>
</dbReference>
<dbReference type="PANTHER" id="PTHR46499">
    <property type="entry name" value="QUEUINE TRNA-RIBOSYLTRANSFERASE"/>
    <property type="match status" value="1"/>
</dbReference>
<dbReference type="PANTHER" id="PTHR46499:SF1">
    <property type="entry name" value="QUEUINE TRNA-RIBOSYLTRANSFERASE"/>
    <property type="match status" value="1"/>
</dbReference>
<dbReference type="Pfam" id="PF01702">
    <property type="entry name" value="TGT"/>
    <property type="match status" value="1"/>
</dbReference>
<dbReference type="SUPFAM" id="SSF51713">
    <property type="entry name" value="tRNA-guanine transglycosylase"/>
    <property type="match status" value="1"/>
</dbReference>
<sequence length="382" mass="43489">MMKYELKSTSGMARRGRLTFSRPQGECYVETPAFMPVGTYGTVKGMTPEEVKATGAQILLGNTFHLWLRPGQEIMKMHGDLHDFMQWHGPILTDSGGFQVLSLGKLRKIKEEGVTFQNPISGEKIFLSPEKSMEIQYDLGSDIVMIFDECTPYPATLEYAKKSMEMSLRWAKRSRTRFDELANPRALFGIVQGSTYEELRRESVKGLINIGFDGYAVGGLAVGEPKEEMHRILEFTTPLLPQDKPRYLMGVGKPEDLVEGVRRGIDMFDCVMPTRNARNGHLFVSDGVVKIRNAKYKNDTTPLDAECDCYTCKNYTKAYLYHLDKCGEILGARLNTIHNLRYYQRLMAQIRQAIEQDCFDEFVVEFYAKIGKEVPPLHLKSE</sequence>
<organism>
    <name type="scientific">Haemophilus ducreyi (strain 35000HP / ATCC 700724)</name>
    <dbReference type="NCBI Taxonomy" id="233412"/>
    <lineage>
        <taxon>Bacteria</taxon>
        <taxon>Pseudomonadati</taxon>
        <taxon>Pseudomonadota</taxon>
        <taxon>Gammaproteobacteria</taxon>
        <taxon>Pasteurellales</taxon>
        <taxon>Pasteurellaceae</taxon>
        <taxon>Haemophilus</taxon>
    </lineage>
</organism>
<comment type="function">
    <text evidence="1">Catalyzes the base-exchange of a guanine (G) residue with the queuine precursor 7-aminomethyl-7-deazaguanine (PreQ1) at position 34 (anticodon wobble position) in tRNAs with GU(N) anticodons (tRNA-Asp, -Asn, -His and -Tyr). Catalysis occurs through a double-displacement mechanism. The nucleophile active site attacks the C1' of nucleotide 34 to detach the guanine base from the RNA, forming a covalent enzyme-RNA intermediate. The proton acceptor active site deprotonates the incoming PreQ1, allowing a nucleophilic attack on the C1' of the ribose to form the product. After dissociation, two additional enzymatic reactions on the tRNA convert PreQ1 to queuine (Q), resulting in the hypermodified nucleoside queuosine (7-(((4,5-cis-dihydroxy-2-cyclopenten-1-yl)amino)methyl)-7-deazaguanosine).</text>
</comment>
<comment type="catalytic activity">
    <reaction evidence="1">
        <text>7-aminomethyl-7-carbaguanine + guanosine(34) in tRNA = 7-aminomethyl-7-carbaguanosine(34) in tRNA + guanine</text>
        <dbReference type="Rhea" id="RHEA:24104"/>
        <dbReference type="Rhea" id="RHEA-COMP:10341"/>
        <dbReference type="Rhea" id="RHEA-COMP:10342"/>
        <dbReference type="ChEBI" id="CHEBI:16235"/>
        <dbReference type="ChEBI" id="CHEBI:58703"/>
        <dbReference type="ChEBI" id="CHEBI:74269"/>
        <dbReference type="ChEBI" id="CHEBI:82833"/>
        <dbReference type="EC" id="2.4.2.29"/>
    </reaction>
</comment>
<comment type="cofactor">
    <cofactor evidence="1">
        <name>Zn(2+)</name>
        <dbReference type="ChEBI" id="CHEBI:29105"/>
    </cofactor>
    <text evidence="1">Binds 1 zinc ion per subunit.</text>
</comment>
<comment type="pathway">
    <text evidence="1">tRNA modification; tRNA-queuosine biosynthesis.</text>
</comment>
<comment type="subunit">
    <text evidence="1">Homodimer. Within each dimer, one monomer is responsible for RNA recognition and catalysis, while the other monomer binds to the replacement base PreQ1.</text>
</comment>
<comment type="similarity">
    <text evidence="1">Belongs to the queuine tRNA-ribosyltransferase family.</text>
</comment>